<evidence type="ECO:0000255" key="1">
    <source>
        <dbReference type="HAMAP-Rule" id="MF_00203"/>
    </source>
</evidence>
<name>UVRC_WOLPM</name>
<dbReference type="EMBL" id="AE017196">
    <property type="protein sequence ID" value="AAS13906.1"/>
    <property type="molecule type" value="Genomic_DNA"/>
</dbReference>
<dbReference type="RefSeq" id="WP_010962398.1">
    <property type="nucleotide sequence ID" value="NZ_OX384529.1"/>
</dbReference>
<dbReference type="SMR" id="Q73IK6"/>
<dbReference type="EnsemblBacteria" id="AAS13906">
    <property type="protein sequence ID" value="AAS13906"/>
    <property type="gene ID" value="WD_0154"/>
</dbReference>
<dbReference type="GeneID" id="70035646"/>
<dbReference type="KEGG" id="wol:WD_0154"/>
<dbReference type="eggNOG" id="COG0322">
    <property type="taxonomic scope" value="Bacteria"/>
</dbReference>
<dbReference type="Proteomes" id="UP000008215">
    <property type="component" value="Chromosome"/>
</dbReference>
<dbReference type="GO" id="GO:0005737">
    <property type="term" value="C:cytoplasm"/>
    <property type="evidence" value="ECO:0007669"/>
    <property type="project" value="UniProtKB-SubCell"/>
</dbReference>
<dbReference type="GO" id="GO:0009380">
    <property type="term" value="C:excinuclease repair complex"/>
    <property type="evidence" value="ECO:0007669"/>
    <property type="project" value="InterPro"/>
</dbReference>
<dbReference type="GO" id="GO:0003677">
    <property type="term" value="F:DNA binding"/>
    <property type="evidence" value="ECO:0007669"/>
    <property type="project" value="UniProtKB-UniRule"/>
</dbReference>
<dbReference type="GO" id="GO:0009381">
    <property type="term" value="F:excinuclease ABC activity"/>
    <property type="evidence" value="ECO:0007669"/>
    <property type="project" value="UniProtKB-UniRule"/>
</dbReference>
<dbReference type="GO" id="GO:0006289">
    <property type="term" value="P:nucleotide-excision repair"/>
    <property type="evidence" value="ECO:0007669"/>
    <property type="project" value="UniProtKB-UniRule"/>
</dbReference>
<dbReference type="GO" id="GO:0009432">
    <property type="term" value="P:SOS response"/>
    <property type="evidence" value="ECO:0007669"/>
    <property type="project" value="UniProtKB-UniRule"/>
</dbReference>
<dbReference type="CDD" id="cd10434">
    <property type="entry name" value="GIY-YIG_UvrC_Cho"/>
    <property type="match status" value="1"/>
</dbReference>
<dbReference type="FunFam" id="3.40.1440.10:FF:000001">
    <property type="entry name" value="UvrABC system protein C"/>
    <property type="match status" value="1"/>
</dbReference>
<dbReference type="Gene3D" id="1.10.150.20">
    <property type="entry name" value="5' to 3' exonuclease, C-terminal subdomain"/>
    <property type="match status" value="1"/>
</dbReference>
<dbReference type="Gene3D" id="3.40.1440.10">
    <property type="entry name" value="GIY-YIG endonuclease"/>
    <property type="match status" value="1"/>
</dbReference>
<dbReference type="Gene3D" id="3.30.420.340">
    <property type="entry name" value="UvrC, RNAse H endonuclease domain"/>
    <property type="match status" value="1"/>
</dbReference>
<dbReference type="HAMAP" id="MF_00203">
    <property type="entry name" value="UvrC"/>
    <property type="match status" value="1"/>
</dbReference>
<dbReference type="InterPro" id="IPR000305">
    <property type="entry name" value="GIY-YIG_endonuc"/>
</dbReference>
<dbReference type="InterPro" id="IPR035901">
    <property type="entry name" value="GIY-YIG_endonuc_sf"/>
</dbReference>
<dbReference type="InterPro" id="IPR047296">
    <property type="entry name" value="GIY-YIG_UvrC_Cho"/>
</dbReference>
<dbReference type="InterPro" id="IPR003583">
    <property type="entry name" value="Hlx-hairpin-Hlx_DNA-bd_motif"/>
</dbReference>
<dbReference type="InterPro" id="IPR010994">
    <property type="entry name" value="RuvA_2-like"/>
</dbReference>
<dbReference type="InterPro" id="IPR001943">
    <property type="entry name" value="UVR_dom"/>
</dbReference>
<dbReference type="InterPro" id="IPR036876">
    <property type="entry name" value="UVR_dom_sf"/>
</dbReference>
<dbReference type="InterPro" id="IPR050066">
    <property type="entry name" value="UvrABC_protein_C"/>
</dbReference>
<dbReference type="InterPro" id="IPR004791">
    <property type="entry name" value="UvrC"/>
</dbReference>
<dbReference type="InterPro" id="IPR001162">
    <property type="entry name" value="UvrC_RNase_H_dom"/>
</dbReference>
<dbReference type="InterPro" id="IPR038476">
    <property type="entry name" value="UvrC_RNase_H_dom_sf"/>
</dbReference>
<dbReference type="NCBIfam" id="TIGR00194">
    <property type="entry name" value="uvrC"/>
    <property type="match status" value="1"/>
</dbReference>
<dbReference type="PANTHER" id="PTHR30562:SF1">
    <property type="entry name" value="UVRABC SYSTEM PROTEIN C"/>
    <property type="match status" value="1"/>
</dbReference>
<dbReference type="PANTHER" id="PTHR30562">
    <property type="entry name" value="UVRC/OXIDOREDUCTASE"/>
    <property type="match status" value="1"/>
</dbReference>
<dbReference type="Pfam" id="PF01541">
    <property type="entry name" value="GIY-YIG"/>
    <property type="match status" value="1"/>
</dbReference>
<dbReference type="Pfam" id="PF14520">
    <property type="entry name" value="HHH_5"/>
    <property type="match status" value="1"/>
</dbReference>
<dbReference type="Pfam" id="PF02151">
    <property type="entry name" value="UVR"/>
    <property type="match status" value="1"/>
</dbReference>
<dbReference type="Pfam" id="PF22920">
    <property type="entry name" value="UvrC_RNaseH"/>
    <property type="match status" value="1"/>
</dbReference>
<dbReference type="Pfam" id="PF08459">
    <property type="entry name" value="UvrC_RNaseH_dom"/>
    <property type="match status" value="1"/>
</dbReference>
<dbReference type="SMART" id="SM00465">
    <property type="entry name" value="GIYc"/>
    <property type="match status" value="1"/>
</dbReference>
<dbReference type="SMART" id="SM00278">
    <property type="entry name" value="HhH1"/>
    <property type="match status" value="2"/>
</dbReference>
<dbReference type="SUPFAM" id="SSF46600">
    <property type="entry name" value="C-terminal UvrC-binding domain of UvrB"/>
    <property type="match status" value="1"/>
</dbReference>
<dbReference type="SUPFAM" id="SSF82771">
    <property type="entry name" value="GIY-YIG endonuclease"/>
    <property type="match status" value="1"/>
</dbReference>
<dbReference type="SUPFAM" id="SSF47781">
    <property type="entry name" value="RuvA domain 2-like"/>
    <property type="match status" value="1"/>
</dbReference>
<dbReference type="PROSITE" id="PS50164">
    <property type="entry name" value="GIY_YIG"/>
    <property type="match status" value="1"/>
</dbReference>
<dbReference type="PROSITE" id="PS50165">
    <property type="entry name" value="UVRC"/>
    <property type="match status" value="1"/>
</dbReference>
<gene>
    <name evidence="1" type="primary">uvrC</name>
    <name type="ordered locus">WD_0154</name>
</gene>
<feature type="chain" id="PRO_0000227491" description="UvrABC system protein C">
    <location>
        <begin position="1"/>
        <end position="605"/>
    </location>
</feature>
<feature type="domain" description="GIY-YIG" evidence="1">
    <location>
        <begin position="14"/>
        <end position="92"/>
    </location>
</feature>
<feature type="domain" description="UVR" evidence="1">
    <location>
        <begin position="202"/>
        <end position="237"/>
    </location>
</feature>
<keyword id="KW-0963">Cytoplasm</keyword>
<keyword id="KW-0227">DNA damage</keyword>
<keyword id="KW-0228">DNA excision</keyword>
<keyword id="KW-0234">DNA repair</keyword>
<keyword id="KW-0267">Excision nuclease</keyword>
<keyword id="KW-0742">SOS response</keyword>
<organism>
    <name type="scientific">Wolbachia pipientis wMel</name>
    <dbReference type="NCBI Taxonomy" id="163164"/>
    <lineage>
        <taxon>Bacteria</taxon>
        <taxon>Pseudomonadati</taxon>
        <taxon>Pseudomonadota</taxon>
        <taxon>Alphaproteobacteria</taxon>
        <taxon>Rickettsiales</taxon>
        <taxon>Anaplasmataceae</taxon>
        <taxon>Wolbachieae</taxon>
        <taxon>Wolbachia</taxon>
    </lineage>
</organism>
<sequence>MLRQYKEQIKSSPQSCGVYKMVGDKNKVLYVGKAKNLKSRLSDYLQFENLSERIRVMLLQVIKVEIFITENEIEALLLEAQLIKSLKPLYNIVLKDGKFYPYITISKHDYPRIAKYRGKFKKNEFHYYGPFTSAAAVKQTILSLQKAFLLRVCSDQYFSSTKRPCIEYQIKRCSAPCINKITKDDYCQSVKQARNTLLGRNKEVKEQLLFTMRKCSSEENYELAAIYRDRVKFLEQIQIQHTDFSFEKDADFFSIVREEDLACISVLSFRNKDNYGSTPYFAENCGDHSNDEILSTFLVNFYNSANIPPIQIYVPDSIVDKEIIEQALYKVAQKPVKVLHAKNKKERDLLKFVYDNSQHSLEQKLIDYRNNLEKLEELSKIFLLPNIPKRIEVYDNSHISGSQQIGVMIVAGQEGFLKSEYRKFTIKEKFSGDDYKMMREVLTRRFSGNIKGIIPDFLLIDGGPGHVSIVQNVLEVLNINVPFACMAKGPDRNAGNERFYMLGREEFSLANDSKVMLYLQSLRNEAHRFAITSHRKKRDKQFIVSQLSKIPGIGNKRKKALMSYFGSVKNISRASLAEIQNVPGISKGLAEVILKYVNYKRGVLE</sequence>
<reference key="1">
    <citation type="journal article" date="2004" name="PLoS Biol.">
        <title>Phylogenomics of the reproductive parasite Wolbachia pipientis wMel: a streamlined genome overrun by mobile genetic elements.</title>
        <authorList>
            <person name="Wu M."/>
            <person name="Sun L.V."/>
            <person name="Vamathevan J.J."/>
            <person name="Riegler M."/>
            <person name="DeBoy R.T."/>
            <person name="Brownlie J.C."/>
            <person name="McGraw E.A."/>
            <person name="Martin W."/>
            <person name="Esser C."/>
            <person name="Ahmadinejad N."/>
            <person name="Wiegand C."/>
            <person name="Madupu R."/>
            <person name="Beanan M.J."/>
            <person name="Brinkac L.M."/>
            <person name="Daugherty S.C."/>
            <person name="Durkin A.S."/>
            <person name="Kolonay J.F."/>
            <person name="Nelson W.C."/>
            <person name="Mohamoud Y."/>
            <person name="Lee P."/>
            <person name="Berry K.J."/>
            <person name="Young M.B."/>
            <person name="Utterback T.R."/>
            <person name="Weidman J.F."/>
            <person name="Nierman W.C."/>
            <person name="Paulsen I.T."/>
            <person name="Nelson K.E."/>
            <person name="Tettelin H."/>
            <person name="O'Neill S.L."/>
            <person name="Eisen J.A."/>
        </authorList>
    </citation>
    <scope>NUCLEOTIDE SEQUENCE [LARGE SCALE GENOMIC DNA]</scope>
</reference>
<comment type="function">
    <text evidence="1">The UvrABC repair system catalyzes the recognition and processing of DNA lesions. UvrC both incises the 5' and 3' sides of the lesion. The N-terminal half is responsible for the 3' incision and the C-terminal half is responsible for the 5' incision.</text>
</comment>
<comment type="subunit">
    <text evidence="1">Interacts with UvrB in an incision complex.</text>
</comment>
<comment type="subcellular location">
    <subcellularLocation>
        <location evidence="1">Cytoplasm</location>
    </subcellularLocation>
</comment>
<comment type="similarity">
    <text evidence="1">Belongs to the UvrC family.</text>
</comment>
<proteinExistence type="inferred from homology"/>
<protein>
    <recommendedName>
        <fullName evidence="1">UvrABC system protein C</fullName>
        <shortName evidence="1">Protein UvrC</shortName>
    </recommendedName>
    <alternativeName>
        <fullName evidence="1">Excinuclease ABC subunit C</fullName>
    </alternativeName>
</protein>
<accession>Q73IK6</accession>